<organism>
    <name type="scientific">Shewanella putrefaciens (strain CN-32 / ATCC BAA-453)</name>
    <dbReference type="NCBI Taxonomy" id="319224"/>
    <lineage>
        <taxon>Bacteria</taxon>
        <taxon>Pseudomonadati</taxon>
        <taxon>Pseudomonadota</taxon>
        <taxon>Gammaproteobacteria</taxon>
        <taxon>Alteromonadales</taxon>
        <taxon>Shewanellaceae</taxon>
        <taxon>Shewanella</taxon>
    </lineage>
</organism>
<sequence length="124" mass="14303">MEYEFRRNSLTGTFLATFSMDHEVLGQWFSEELGPELAKIQQVLDSVTEILAGKRESWQLIGSDLTLEIDREQARVYANVLGFDEEYELEDAMSLYDAESEAYCGLEDFEQALLSWQEFVQKGI</sequence>
<evidence type="ECO:0000255" key="1">
    <source>
        <dbReference type="HAMAP-Rule" id="MF_01053"/>
    </source>
</evidence>
<feature type="chain" id="PRO_1000064367" description="UPF0231 protein Sputcn32_0682">
    <location>
        <begin position="1"/>
        <end position="124"/>
    </location>
</feature>
<accession>A4Y379</accession>
<dbReference type="EMBL" id="CP000681">
    <property type="protein sequence ID" value="ABP74412.1"/>
    <property type="molecule type" value="Genomic_DNA"/>
</dbReference>
<dbReference type="STRING" id="319224.Sputcn32_0682"/>
<dbReference type="KEGG" id="spc:Sputcn32_0682"/>
<dbReference type="eggNOG" id="COG3112">
    <property type="taxonomic scope" value="Bacteria"/>
</dbReference>
<dbReference type="HOGENOM" id="CLU_139226_0_0_6"/>
<dbReference type="HAMAP" id="MF_01053">
    <property type="entry name" value="UPF0231"/>
    <property type="match status" value="1"/>
</dbReference>
<dbReference type="InterPro" id="IPR008249">
    <property type="entry name" value="UPF0231"/>
</dbReference>
<dbReference type="NCBIfam" id="NF003581">
    <property type="entry name" value="PRK05248.3-2"/>
    <property type="match status" value="1"/>
</dbReference>
<dbReference type="Pfam" id="PF06062">
    <property type="entry name" value="UPF0231"/>
    <property type="match status" value="1"/>
</dbReference>
<dbReference type="PIRSF" id="PIRSF006287">
    <property type="entry name" value="UCP006287"/>
    <property type="match status" value="1"/>
</dbReference>
<protein>
    <recommendedName>
        <fullName evidence="1">UPF0231 protein Sputcn32_0682</fullName>
    </recommendedName>
</protein>
<proteinExistence type="inferred from homology"/>
<comment type="similarity">
    <text evidence="1">Belongs to the UPF0231 family.</text>
</comment>
<gene>
    <name type="ordered locus">Sputcn32_0682</name>
</gene>
<reference key="1">
    <citation type="submission" date="2007-04" db="EMBL/GenBank/DDBJ databases">
        <title>Complete sequence of Shewanella putrefaciens CN-32.</title>
        <authorList>
            <consortium name="US DOE Joint Genome Institute"/>
            <person name="Copeland A."/>
            <person name="Lucas S."/>
            <person name="Lapidus A."/>
            <person name="Barry K."/>
            <person name="Detter J.C."/>
            <person name="Glavina del Rio T."/>
            <person name="Hammon N."/>
            <person name="Israni S."/>
            <person name="Dalin E."/>
            <person name="Tice H."/>
            <person name="Pitluck S."/>
            <person name="Chain P."/>
            <person name="Malfatti S."/>
            <person name="Shin M."/>
            <person name="Vergez L."/>
            <person name="Schmutz J."/>
            <person name="Larimer F."/>
            <person name="Land M."/>
            <person name="Hauser L."/>
            <person name="Kyrpides N."/>
            <person name="Mikhailova N."/>
            <person name="Romine M.F."/>
            <person name="Fredrickson J."/>
            <person name="Tiedje J."/>
            <person name="Richardson P."/>
        </authorList>
    </citation>
    <scope>NUCLEOTIDE SEQUENCE [LARGE SCALE GENOMIC DNA]</scope>
    <source>
        <strain>CN-32 / ATCC BAA-453</strain>
    </source>
</reference>
<name>Y682_SHEPC</name>